<dbReference type="EC" id="2.7.8.7" evidence="1"/>
<dbReference type="EMBL" id="CP000235">
    <property type="protein sequence ID" value="ABD43476.1"/>
    <property type="molecule type" value="Genomic_DNA"/>
</dbReference>
<dbReference type="RefSeq" id="WP_011450751.1">
    <property type="nucleotide sequence ID" value="NC_007797.1"/>
</dbReference>
<dbReference type="SMR" id="Q2GK71"/>
<dbReference type="STRING" id="212042.APH_0646"/>
<dbReference type="PaxDb" id="212042-APH_0646"/>
<dbReference type="EnsemblBacteria" id="ABD43476">
    <property type="protein sequence ID" value="ABD43476"/>
    <property type="gene ID" value="APH_0646"/>
</dbReference>
<dbReference type="GeneID" id="92748271"/>
<dbReference type="KEGG" id="aph:APH_0646"/>
<dbReference type="eggNOG" id="COG0736">
    <property type="taxonomic scope" value="Bacteria"/>
</dbReference>
<dbReference type="HOGENOM" id="CLU_089696_1_2_5"/>
<dbReference type="Proteomes" id="UP000001943">
    <property type="component" value="Chromosome"/>
</dbReference>
<dbReference type="GO" id="GO:0005829">
    <property type="term" value="C:cytosol"/>
    <property type="evidence" value="ECO:0007669"/>
    <property type="project" value="TreeGrafter"/>
</dbReference>
<dbReference type="GO" id="GO:0008897">
    <property type="term" value="F:holo-[acyl-carrier-protein] synthase activity"/>
    <property type="evidence" value="ECO:0007669"/>
    <property type="project" value="UniProtKB-UniRule"/>
</dbReference>
<dbReference type="GO" id="GO:0000287">
    <property type="term" value="F:magnesium ion binding"/>
    <property type="evidence" value="ECO:0007669"/>
    <property type="project" value="UniProtKB-UniRule"/>
</dbReference>
<dbReference type="GO" id="GO:0006633">
    <property type="term" value="P:fatty acid biosynthetic process"/>
    <property type="evidence" value="ECO:0007669"/>
    <property type="project" value="UniProtKB-UniRule"/>
</dbReference>
<dbReference type="GO" id="GO:0019878">
    <property type="term" value="P:lysine biosynthetic process via aminoadipic acid"/>
    <property type="evidence" value="ECO:0007669"/>
    <property type="project" value="TreeGrafter"/>
</dbReference>
<dbReference type="Gene3D" id="3.90.470.20">
    <property type="entry name" value="4'-phosphopantetheinyl transferase domain"/>
    <property type="match status" value="1"/>
</dbReference>
<dbReference type="HAMAP" id="MF_00101">
    <property type="entry name" value="AcpS"/>
    <property type="match status" value="1"/>
</dbReference>
<dbReference type="InterPro" id="IPR008278">
    <property type="entry name" value="4-PPantetheinyl_Trfase_dom"/>
</dbReference>
<dbReference type="InterPro" id="IPR037143">
    <property type="entry name" value="4-PPantetheinyl_Trfase_dom_sf"/>
</dbReference>
<dbReference type="InterPro" id="IPR002582">
    <property type="entry name" value="ACPS"/>
</dbReference>
<dbReference type="InterPro" id="IPR050559">
    <property type="entry name" value="P-Pant_transferase_sf"/>
</dbReference>
<dbReference type="InterPro" id="IPR004568">
    <property type="entry name" value="Ppantetheine-prot_Trfase_dom"/>
</dbReference>
<dbReference type="NCBIfam" id="TIGR00516">
    <property type="entry name" value="acpS"/>
    <property type="match status" value="1"/>
</dbReference>
<dbReference type="NCBIfam" id="TIGR00556">
    <property type="entry name" value="pantethn_trn"/>
    <property type="match status" value="1"/>
</dbReference>
<dbReference type="NCBIfam" id="NF011253">
    <property type="entry name" value="PRK14659.1"/>
    <property type="match status" value="1"/>
</dbReference>
<dbReference type="PANTHER" id="PTHR12215:SF10">
    <property type="entry name" value="L-AMINOADIPATE-SEMIALDEHYDE DEHYDROGENASE-PHOSPHOPANTETHEINYL TRANSFERASE"/>
    <property type="match status" value="1"/>
</dbReference>
<dbReference type="PANTHER" id="PTHR12215">
    <property type="entry name" value="PHOSPHOPANTETHEINE TRANSFERASE"/>
    <property type="match status" value="1"/>
</dbReference>
<dbReference type="Pfam" id="PF01648">
    <property type="entry name" value="ACPS"/>
    <property type="match status" value="1"/>
</dbReference>
<dbReference type="SUPFAM" id="SSF56214">
    <property type="entry name" value="4'-phosphopantetheinyl transferase"/>
    <property type="match status" value="1"/>
</dbReference>
<proteinExistence type="inferred from homology"/>
<accession>Q2GK71</accession>
<organism>
    <name type="scientific">Anaplasma phagocytophilum (strain HZ)</name>
    <dbReference type="NCBI Taxonomy" id="212042"/>
    <lineage>
        <taxon>Bacteria</taxon>
        <taxon>Pseudomonadati</taxon>
        <taxon>Pseudomonadota</taxon>
        <taxon>Alphaproteobacteria</taxon>
        <taxon>Rickettsiales</taxon>
        <taxon>Anaplasmataceae</taxon>
        <taxon>Anaplasma</taxon>
        <taxon>phagocytophilum group</taxon>
    </lineage>
</organism>
<sequence>MILGIGVDLVCTRRIQALIAKYGNKFTNRIFSEKEILDSLKYRDEYARARHFAKRFAAKEAYVKALGLGFGRGVEAKDISVHNDPYGQPMISLEGGALRNGHVKLSMSDDGDYAIAFVTLHT</sequence>
<protein>
    <recommendedName>
        <fullName evidence="1">Holo-[acyl-carrier-protein] synthase</fullName>
        <shortName evidence="1">Holo-ACP synthase</shortName>
        <ecNumber evidence="1">2.7.8.7</ecNumber>
    </recommendedName>
    <alternativeName>
        <fullName evidence="1">4'-phosphopantetheinyl transferase AcpS</fullName>
    </alternativeName>
</protein>
<gene>
    <name evidence="1" type="primary">acpS</name>
    <name type="ordered locus">APH_0646</name>
</gene>
<feature type="chain" id="PRO_1000008381" description="Holo-[acyl-carrier-protein] synthase">
    <location>
        <begin position="1"/>
        <end position="122"/>
    </location>
</feature>
<feature type="binding site" evidence="1">
    <location>
        <position position="8"/>
    </location>
    <ligand>
        <name>Mg(2+)</name>
        <dbReference type="ChEBI" id="CHEBI:18420"/>
    </ligand>
</feature>
<feature type="binding site" evidence="1">
    <location>
        <position position="60"/>
    </location>
    <ligand>
        <name>Mg(2+)</name>
        <dbReference type="ChEBI" id="CHEBI:18420"/>
    </ligand>
</feature>
<name>ACPS_ANAPZ</name>
<evidence type="ECO:0000255" key="1">
    <source>
        <dbReference type="HAMAP-Rule" id="MF_00101"/>
    </source>
</evidence>
<reference key="1">
    <citation type="journal article" date="2006" name="PLoS Genet.">
        <title>Comparative genomics of emerging human ehrlichiosis agents.</title>
        <authorList>
            <person name="Dunning Hotopp J.C."/>
            <person name="Lin M."/>
            <person name="Madupu R."/>
            <person name="Crabtree J."/>
            <person name="Angiuoli S.V."/>
            <person name="Eisen J.A."/>
            <person name="Seshadri R."/>
            <person name="Ren Q."/>
            <person name="Wu M."/>
            <person name="Utterback T.R."/>
            <person name="Smith S."/>
            <person name="Lewis M."/>
            <person name="Khouri H."/>
            <person name="Zhang C."/>
            <person name="Niu H."/>
            <person name="Lin Q."/>
            <person name="Ohashi N."/>
            <person name="Zhi N."/>
            <person name="Nelson W.C."/>
            <person name="Brinkac L.M."/>
            <person name="Dodson R.J."/>
            <person name="Rosovitz M.J."/>
            <person name="Sundaram J.P."/>
            <person name="Daugherty S.C."/>
            <person name="Davidsen T."/>
            <person name="Durkin A.S."/>
            <person name="Gwinn M.L."/>
            <person name="Haft D.H."/>
            <person name="Selengut J.D."/>
            <person name="Sullivan S.A."/>
            <person name="Zafar N."/>
            <person name="Zhou L."/>
            <person name="Benahmed F."/>
            <person name="Forberger H."/>
            <person name="Halpin R."/>
            <person name="Mulligan S."/>
            <person name="Robinson J."/>
            <person name="White O."/>
            <person name="Rikihisa Y."/>
            <person name="Tettelin H."/>
        </authorList>
    </citation>
    <scope>NUCLEOTIDE SEQUENCE [LARGE SCALE GENOMIC DNA]</scope>
    <source>
        <strain>HZ</strain>
    </source>
</reference>
<comment type="function">
    <text evidence="1">Transfers the 4'-phosphopantetheine moiety from coenzyme A to a Ser of acyl-carrier-protein.</text>
</comment>
<comment type="catalytic activity">
    <reaction evidence="1">
        <text>apo-[ACP] + CoA = holo-[ACP] + adenosine 3',5'-bisphosphate + H(+)</text>
        <dbReference type="Rhea" id="RHEA:12068"/>
        <dbReference type="Rhea" id="RHEA-COMP:9685"/>
        <dbReference type="Rhea" id="RHEA-COMP:9690"/>
        <dbReference type="ChEBI" id="CHEBI:15378"/>
        <dbReference type="ChEBI" id="CHEBI:29999"/>
        <dbReference type="ChEBI" id="CHEBI:57287"/>
        <dbReference type="ChEBI" id="CHEBI:58343"/>
        <dbReference type="ChEBI" id="CHEBI:64479"/>
        <dbReference type="EC" id="2.7.8.7"/>
    </reaction>
</comment>
<comment type="cofactor">
    <cofactor evidence="1">
        <name>Mg(2+)</name>
        <dbReference type="ChEBI" id="CHEBI:18420"/>
    </cofactor>
</comment>
<comment type="subcellular location">
    <subcellularLocation>
        <location evidence="1">Cytoplasm</location>
    </subcellularLocation>
</comment>
<comment type="similarity">
    <text evidence="1">Belongs to the P-Pant transferase superfamily. AcpS family.</text>
</comment>
<keyword id="KW-0963">Cytoplasm</keyword>
<keyword id="KW-0275">Fatty acid biosynthesis</keyword>
<keyword id="KW-0276">Fatty acid metabolism</keyword>
<keyword id="KW-0444">Lipid biosynthesis</keyword>
<keyword id="KW-0443">Lipid metabolism</keyword>
<keyword id="KW-0460">Magnesium</keyword>
<keyword id="KW-0479">Metal-binding</keyword>
<keyword id="KW-0808">Transferase</keyword>